<evidence type="ECO:0000250" key="1"/>
<evidence type="ECO:0000255" key="2"/>
<evidence type="ECO:0000305" key="3"/>
<reference key="1">
    <citation type="journal article" date="2008" name="FEMS Yeast Res.">
        <title>Comparative genome analysis of a Saccharomyces cerevisiae wine strain.</title>
        <authorList>
            <person name="Borneman A.R."/>
            <person name="Forgan A.H."/>
            <person name="Pretorius I.S."/>
            <person name="Chambers P.J."/>
        </authorList>
    </citation>
    <scope>NUCLEOTIDE SEQUENCE [LARGE SCALE GENOMIC DNA]</scope>
    <source>
        <strain>AWRI1631</strain>
    </source>
</reference>
<accession>B5VPM5</accession>
<keyword id="KW-0472">Membrane</keyword>
<keyword id="KW-0496">Mitochondrion</keyword>
<keyword id="KW-0999">Mitochondrion inner membrane</keyword>
<keyword id="KW-0809">Transit peptide</keyword>
<gene>
    <name type="primary">ATP25</name>
    <name type="ORF">AWRI1631_132400</name>
</gene>
<proteinExistence type="inferred from homology"/>
<dbReference type="EMBL" id="ABSV01001820">
    <property type="protein sequence ID" value="EDZ70131.1"/>
    <property type="molecule type" value="Genomic_DNA"/>
</dbReference>
<dbReference type="SMR" id="B5VPM5"/>
<dbReference type="OrthoDB" id="36829at4893"/>
<dbReference type="Proteomes" id="UP000008988">
    <property type="component" value="Unassembled WGS sequence"/>
</dbReference>
<dbReference type="GO" id="GO:0005743">
    <property type="term" value="C:mitochondrial inner membrane"/>
    <property type="evidence" value="ECO:0007669"/>
    <property type="project" value="UniProtKB-SubCell"/>
</dbReference>
<dbReference type="GO" id="GO:0140053">
    <property type="term" value="P:mitochondrial gene expression"/>
    <property type="evidence" value="ECO:0007669"/>
    <property type="project" value="InterPro"/>
</dbReference>
<dbReference type="GO" id="GO:0048255">
    <property type="term" value="P:mRNA stabilization"/>
    <property type="evidence" value="ECO:0007669"/>
    <property type="project" value="InterPro"/>
</dbReference>
<dbReference type="Gene3D" id="3.30.460.10">
    <property type="entry name" value="Beta Polymerase, domain 2"/>
    <property type="match status" value="1"/>
</dbReference>
<dbReference type="InterPro" id="IPR040152">
    <property type="entry name" value="Atp25"/>
</dbReference>
<dbReference type="InterPro" id="IPR025210">
    <property type="entry name" value="ATP25_mRNA_stabil_dom"/>
</dbReference>
<dbReference type="InterPro" id="IPR043519">
    <property type="entry name" value="NT_sf"/>
</dbReference>
<dbReference type="PANTHER" id="PTHR28087">
    <property type="entry name" value="ATPASE SYNTHESIS PROTEIN 25, MITOCHONDRIAL"/>
    <property type="match status" value="1"/>
</dbReference>
<dbReference type="PANTHER" id="PTHR28087:SF1">
    <property type="entry name" value="ATPASE SYNTHESIS PROTEIN 25, MITOCHONDRIAL"/>
    <property type="match status" value="1"/>
</dbReference>
<dbReference type="Pfam" id="PF13929">
    <property type="entry name" value="mRNA_stabil"/>
    <property type="match status" value="1"/>
</dbReference>
<dbReference type="Pfam" id="PF02410">
    <property type="entry name" value="RsfS"/>
    <property type="match status" value="1"/>
</dbReference>
<dbReference type="SUPFAM" id="SSF81301">
    <property type="entry name" value="Nucleotidyltransferase"/>
    <property type="match status" value="1"/>
</dbReference>
<sequence>MNKFCLLPFHGKRIGVANIPFTILFKKGPCFLHSHITAVYYSTKGKNDSHEQSRVSKKSTFTPLETPWYLRIVDNEKELMEGKKNNHHTMNKELEIPKTSPNSLRKIADLLTGKLGLDDFLVFDLRKKSPNSVSAVNKLGDFMVICTARSTKHCHKSFLELNKFLKHEFCSSAYVEGNFNERQESRRKRRLARKSNLSKLLGRSSECSAKDLNSEAWYMIDCRVDGIFVNILTQRRRNELNLEELYAPENEKSKFQNIDSGNVPTISGVNEISSNNNILLGLRRLAQQRRRYSTINPNGLSNLRYFLQKEDFKGANKIIQSSSGTETHNIRTLEHVKNTLKDLVGQERKVDVVQWKSLFDEHSTFLTINQPAAYWPLRLEYAILLNKADPQFYSDRVFLKDYLLLKKSLGQELIREDLIALLEMVLKTQHSSHSYFNLVKQNRVIIRALNLFKGLQTEDDGSVVYDEEVISLLLNSMVADERVKLRSLYETIDHIFQTFGDKLTSGMIVSILQNLAKIKDWNKLLQVWEAITPTEGEGQDKRPWNEFINVINQSGDSHVISKIVNNGHLLWIRRLNVNVTPELCNSIKALLKTAGMENSTLEEFLVRGTNNQ</sequence>
<organism>
    <name type="scientific">Saccharomyces cerevisiae (strain AWRI1631)</name>
    <name type="common">Baker's yeast</name>
    <dbReference type="NCBI Taxonomy" id="545124"/>
    <lineage>
        <taxon>Eukaryota</taxon>
        <taxon>Fungi</taxon>
        <taxon>Dikarya</taxon>
        <taxon>Ascomycota</taxon>
        <taxon>Saccharomycotina</taxon>
        <taxon>Saccharomycetes</taxon>
        <taxon>Saccharomycetales</taxon>
        <taxon>Saccharomycetaceae</taxon>
        <taxon>Saccharomyces</taxon>
    </lineage>
</organism>
<comment type="function">
    <text evidence="1">mRNA stabilization factor specific for the 0.95 kb OLI1 mRNA. Also involved in OLI1 ring formation (By similarity).</text>
</comment>
<comment type="subcellular location">
    <subcellularLocation>
        <location evidence="1">Mitochondrion inner membrane</location>
        <topology evidence="1">Peripheral membrane protein</topology>
        <orientation evidence="1">Matrix side</orientation>
    </subcellularLocation>
</comment>
<comment type="similarity">
    <text evidence="3">Belongs to the ATP25 family.</text>
</comment>
<feature type="transit peptide" description="Mitochondrion" evidence="2">
    <location>
        <begin position="1"/>
        <end position="14"/>
    </location>
</feature>
<feature type="chain" id="PRO_0000404494" description="ATPase synthesis protein 25, mitochondrial">
    <location>
        <begin position="15"/>
        <end position="612"/>
    </location>
</feature>
<name>ATP25_YEAS6</name>
<protein>
    <recommendedName>
        <fullName>ATPase synthesis protein 25, mitochondrial</fullName>
    </recommendedName>
    <alternativeName>
        <fullName>OLI1 mRNA stabilization factor</fullName>
    </alternativeName>
</protein>